<keyword id="KW-1185">Reference proteome</keyword>
<name>Y6933_METNO</name>
<evidence type="ECO:0000255" key="1">
    <source>
        <dbReference type="HAMAP-Rule" id="MF_00758"/>
    </source>
</evidence>
<accession>B8IHL5</accession>
<organism>
    <name type="scientific">Methylobacterium nodulans (strain LMG 21967 / CNCM I-2342 / ORS 2060)</name>
    <dbReference type="NCBI Taxonomy" id="460265"/>
    <lineage>
        <taxon>Bacteria</taxon>
        <taxon>Pseudomonadati</taxon>
        <taxon>Pseudomonadota</taxon>
        <taxon>Alphaproteobacteria</taxon>
        <taxon>Hyphomicrobiales</taxon>
        <taxon>Methylobacteriaceae</taxon>
        <taxon>Methylobacterium</taxon>
    </lineage>
</organism>
<dbReference type="EMBL" id="CP001349">
    <property type="protein sequence ID" value="ACL61678.1"/>
    <property type="molecule type" value="Genomic_DNA"/>
</dbReference>
<dbReference type="RefSeq" id="WP_015933242.1">
    <property type="nucleotide sequence ID" value="NC_011894.1"/>
</dbReference>
<dbReference type="SMR" id="B8IHL5"/>
<dbReference type="STRING" id="460265.Mnod_6933"/>
<dbReference type="KEGG" id="mno:Mnod_6933"/>
<dbReference type="eggNOG" id="COG1678">
    <property type="taxonomic scope" value="Bacteria"/>
</dbReference>
<dbReference type="HOGENOM" id="CLU_057596_1_0_5"/>
<dbReference type="OrthoDB" id="9807486at2"/>
<dbReference type="Proteomes" id="UP000008207">
    <property type="component" value="Chromosome"/>
</dbReference>
<dbReference type="GO" id="GO:0005829">
    <property type="term" value="C:cytosol"/>
    <property type="evidence" value="ECO:0007669"/>
    <property type="project" value="TreeGrafter"/>
</dbReference>
<dbReference type="Gene3D" id="3.40.1740.10">
    <property type="entry name" value="VC0467-like"/>
    <property type="match status" value="1"/>
</dbReference>
<dbReference type="HAMAP" id="MF_00758">
    <property type="entry name" value="UPF0301"/>
    <property type="match status" value="1"/>
</dbReference>
<dbReference type="InterPro" id="IPR003774">
    <property type="entry name" value="AlgH-like"/>
</dbReference>
<dbReference type="NCBIfam" id="NF001268">
    <property type="entry name" value="PRK00228.1-4"/>
    <property type="match status" value="1"/>
</dbReference>
<dbReference type="PANTHER" id="PTHR30327">
    <property type="entry name" value="UNCHARACTERIZED PROTEIN YQGE"/>
    <property type="match status" value="1"/>
</dbReference>
<dbReference type="PANTHER" id="PTHR30327:SF1">
    <property type="entry name" value="UPF0301 PROTEIN YQGE"/>
    <property type="match status" value="1"/>
</dbReference>
<dbReference type="Pfam" id="PF02622">
    <property type="entry name" value="DUF179"/>
    <property type="match status" value="1"/>
</dbReference>
<dbReference type="SUPFAM" id="SSF143456">
    <property type="entry name" value="VC0467-like"/>
    <property type="match status" value="1"/>
</dbReference>
<protein>
    <recommendedName>
        <fullName evidence="1">UPF0301 protein Mnod_6933</fullName>
    </recommendedName>
</protein>
<gene>
    <name type="ordered locus">Mnod_6933</name>
</gene>
<reference key="1">
    <citation type="submission" date="2009-01" db="EMBL/GenBank/DDBJ databases">
        <title>Complete sequence of chromosome of Methylobacterium nodulans ORS 2060.</title>
        <authorList>
            <consortium name="US DOE Joint Genome Institute"/>
            <person name="Lucas S."/>
            <person name="Copeland A."/>
            <person name="Lapidus A."/>
            <person name="Glavina del Rio T."/>
            <person name="Dalin E."/>
            <person name="Tice H."/>
            <person name="Bruce D."/>
            <person name="Goodwin L."/>
            <person name="Pitluck S."/>
            <person name="Sims D."/>
            <person name="Brettin T."/>
            <person name="Detter J.C."/>
            <person name="Han C."/>
            <person name="Larimer F."/>
            <person name="Land M."/>
            <person name="Hauser L."/>
            <person name="Kyrpides N."/>
            <person name="Ivanova N."/>
            <person name="Marx C.J."/>
            <person name="Richardson P."/>
        </authorList>
    </citation>
    <scope>NUCLEOTIDE SEQUENCE [LARGE SCALE GENOMIC DNA]</scope>
    <source>
        <strain>LMG 21967 / CNCM I-2342 / ORS 2060</strain>
    </source>
</reference>
<comment type="similarity">
    <text evidence="1">Belongs to the UPF0301 (AlgH) family.</text>
</comment>
<feature type="chain" id="PRO_1000148387" description="UPF0301 protein Mnod_6933">
    <location>
        <begin position="1"/>
        <end position="210"/>
    </location>
</feature>
<sequence length="210" mass="22518">MRMRSDPHETTVPGERPAASYLDGQLLVAMPGMTDERFARSVIYLCAHSAEGAMGIIVNKPAADLNMPDLLVQLDIIRQDDAIRLPIRVGHMPVLMGGPVESSRGFVLHSPDFHIDQSTLLIDDGICLTATVEILRAIAAGTGPRDAVLALGYAGWQAGQLESEIQANGWLHCPADPDLIFNTALDAKYDRALRAIGIEPAMLSTSAGHA</sequence>
<proteinExistence type="inferred from homology"/>